<gene>
    <name type="primary">ycf4</name>
</gene>
<protein>
    <recommendedName>
        <fullName>Photosystem I assembly protein Ycf4</fullName>
    </recommendedName>
</protein>
<accession>P49179</accession>
<organism>
    <name type="scientific">Glycine max</name>
    <name type="common">Soybean</name>
    <name type="synonym">Glycine hispida</name>
    <dbReference type="NCBI Taxonomy" id="3847"/>
    <lineage>
        <taxon>Eukaryota</taxon>
        <taxon>Viridiplantae</taxon>
        <taxon>Streptophyta</taxon>
        <taxon>Embryophyta</taxon>
        <taxon>Tracheophyta</taxon>
        <taxon>Spermatophyta</taxon>
        <taxon>Magnoliopsida</taxon>
        <taxon>eudicotyledons</taxon>
        <taxon>Gunneridae</taxon>
        <taxon>Pentapetalae</taxon>
        <taxon>rosids</taxon>
        <taxon>fabids</taxon>
        <taxon>Fabales</taxon>
        <taxon>Fabaceae</taxon>
        <taxon>Papilionoideae</taxon>
        <taxon>50 kb inversion clade</taxon>
        <taxon>NPAAA clade</taxon>
        <taxon>indigoferoid/millettioid clade</taxon>
        <taxon>Phaseoleae</taxon>
        <taxon>Glycine</taxon>
        <taxon>Glycine subgen. Soja</taxon>
    </lineage>
</organism>
<dbReference type="EMBL" id="U26948">
    <property type="protein sequence ID" value="AAA80645.1"/>
    <property type="molecule type" value="Genomic_DNA"/>
</dbReference>
<dbReference type="EMBL" id="DQ317523">
    <property type="status" value="NOT_ANNOTATED_CDS"/>
    <property type="molecule type" value="Genomic_DNA"/>
</dbReference>
<dbReference type="PIR" id="T06343">
    <property type="entry name" value="T06343"/>
</dbReference>
<dbReference type="FunCoup" id="P49179">
    <property type="interactions" value="123"/>
</dbReference>
<dbReference type="STRING" id="3847.P49179"/>
<dbReference type="PaxDb" id="3847-GLYMA14G38985.1"/>
<dbReference type="InParanoid" id="P49179"/>
<dbReference type="Proteomes" id="UP000008827">
    <property type="component" value="Chloroplast"/>
</dbReference>
<dbReference type="GO" id="GO:0009535">
    <property type="term" value="C:chloroplast thylakoid membrane"/>
    <property type="evidence" value="ECO:0007669"/>
    <property type="project" value="UniProtKB-SubCell"/>
</dbReference>
<dbReference type="GO" id="GO:0009522">
    <property type="term" value="C:photosystem I"/>
    <property type="evidence" value="ECO:0007669"/>
    <property type="project" value="InterPro"/>
</dbReference>
<dbReference type="GO" id="GO:0015979">
    <property type="term" value="P:photosynthesis"/>
    <property type="evidence" value="ECO:0007669"/>
    <property type="project" value="UniProtKB-KW"/>
</dbReference>
<dbReference type="InterPro" id="IPR003359">
    <property type="entry name" value="PSI_Ycf4_assembly"/>
</dbReference>
<dbReference type="PANTHER" id="PTHR33288">
    <property type="match status" value="1"/>
</dbReference>
<dbReference type="PANTHER" id="PTHR33288:SF4">
    <property type="entry name" value="PHOTOSYSTEM I ASSEMBLY PROTEIN YCF4"/>
    <property type="match status" value="1"/>
</dbReference>
<dbReference type="Pfam" id="PF02392">
    <property type="entry name" value="Ycf4"/>
    <property type="match status" value="1"/>
</dbReference>
<reference key="1">
    <citation type="online journal article" date="1995" name="Plant Gene Register">
        <title>The rps16, accD, psaI, ORF 203, ORF 151, ORF 103, ORF 229 and petA gene cluster in the chloroplast genome of soybean.</title>
        <authorList>
            <person name="Reverdatto S.V."/>
            <person name="Beilinson V."/>
            <person name="Nielsen N.C."/>
        </authorList>
        <locator>PGR95-051</locator>
    </citation>
    <scope>NUCLEOTIDE SEQUENCE [GENOMIC DNA]</scope>
    <source>
        <strain>cv. Resnik</strain>
        <tissue>Leaf</tissue>
    </source>
</reference>
<reference key="2">
    <citation type="journal article" date="2005" name="Plant Mol. Biol.">
        <title>Complete chloroplast genome sequence of Glycine max and comparative analyses with other legume genomes.</title>
        <authorList>
            <person name="Saski C."/>
            <person name="Lee S.-B."/>
            <person name="Daniell H."/>
            <person name="Wood T.C."/>
            <person name="Tomkins J."/>
            <person name="Kim H.-G."/>
            <person name="Jansen R.K."/>
        </authorList>
    </citation>
    <scope>NUCLEOTIDE SEQUENCE [LARGE SCALE GENOMIC DNA]</scope>
    <source>
        <strain>cv. PI 437654</strain>
    </source>
</reference>
<feature type="chain" id="PRO_0000217628" description="Photosystem I assembly protein Ycf4">
    <location>
        <begin position="1"/>
        <end position="203"/>
    </location>
</feature>
<feature type="transmembrane region" description="Helical" evidence="2">
    <location>
        <begin position="24"/>
        <end position="46"/>
    </location>
</feature>
<feature type="transmembrane region" description="Helical" evidence="2">
    <location>
        <begin position="76"/>
        <end position="98"/>
    </location>
</feature>
<feature type="sequence conflict" description="In Ref. 1; AAA80645." evidence="3" ref="1">
    <original>E</original>
    <variation>K</variation>
    <location>
        <position position="17"/>
    </location>
</feature>
<evidence type="ECO:0000250" key="1"/>
<evidence type="ECO:0000255" key="2"/>
<evidence type="ECO:0000305" key="3"/>
<proteinExistence type="inferred from homology"/>
<sequence>MSIIFRSDDVLIYSMAEVRRTSNLFWAVFTLLGSLGLLFVAISSYLGMDLFFISEKISDFSFIPDFIYFPFIPQGATMAFYGIAGLFSSFYFGSIIFWDIGGGFDIFNKKGKKVRFVRWGFPGKNRRIILEIPMNELHSIRIITEVKEEGIFTRTSTFESIVYLETIEQGFIPLTRIEDNLNGTQIAHKAGELSVFLGVPLFY</sequence>
<keyword id="KW-0150">Chloroplast</keyword>
<keyword id="KW-0472">Membrane</keyword>
<keyword id="KW-0602">Photosynthesis</keyword>
<keyword id="KW-0934">Plastid</keyword>
<keyword id="KW-1185">Reference proteome</keyword>
<keyword id="KW-0793">Thylakoid</keyword>
<keyword id="KW-0812">Transmembrane</keyword>
<keyword id="KW-1133">Transmembrane helix</keyword>
<comment type="function">
    <text evidence="1">Seems to be required for the assembly of the photosystem I complex.</text>
</comment>
<comment type="subcellular location">
    <subcellularLocation>
        <location evidence="1">Plastid</location>
        <location evidence="1">Chloroplast thylakoid membrane</location>
        <topology evidence="1">Multi-pass membrane protein</topology>
    </subcellularLocation>
</comment>
<comment type="similarity">
    <text evidence="3">Belongs to the Ycf4 family.</text>
</comment>
<geneLocation type="chloroplast"/>
<name>YCF4_SOYBN</name>